<keyword id="KW-0574">Periplasm</keyword>
<keyword id="KW-0732">Signal</keyword>
<organism>
    <name type="scientific">Escherichia coli O8 (strain IAI1)</name>
    <dbReference type="NCBI Taxonomy" id="585034"/>
    <lineage>
        <taxon>Bacteria</taxon>
        <taxon>Pseudomonadati</taxon>
        <taxon>Pseudomonadota</taxon>
        <taxon>Gammaproteobacteria</taxon>
        <taxon>Enterobacterales</taxon>
        <taxon>Enterobacteriaceae</taxon>
        <taxon>Escherichia</taxon>
    </lineage>
</organism>
<name>OPGG_ECO8A</name>
<gene>
    <name evidence="1" type="primary">mdoG</name>
    <name evidence="1" type="synonym">opgG</name>
    <name type="ordered locus">ECIAI1_1084</name>
</gene>
<evidence type="ECO:0000255" key="1">
    <source>
        <dbReference type="HAMAP-Rule" id="MF_01069"/>
    </source>
</evidence>
<proteinExistence type="inferred from homology"/>
<accession>B7M924</accession>
<dbReference type="EMBL" id="CU928160">
    <property type="protein sequence ID" value="CAQ97948.1"/>
    <property type="molecule type" value="Genomic_DNA"/>
</dbReference>
<dbReference type="RefSeq" id="WP_015953140.1">
    <property type="nucleotide sequence ID" value="NC_011741.1"/>
</dbReference>
<dbReference type="SMR" id="B7M924"/>
<dbReference type="KEGG" id="ecr:ECIAI1_1084"/>
<dbReference type="HOGENOM" id="CLU_023403_2_0_6"/>
<dbReference type="UniPathway" id="UPA00637"/>
<dbReference type="GO" id="GO:0030288">
    <property type="term" value="C:outer membrane-bounded periplasmic space"/>
    <property type="evidence" value="ECO:0007669"/>
    <property type="project" value="TreeGrafter"/>
</dbReference>
<dbReference type="GO" id="GO:0030246">
    <property type="term" value="F:carbohydrate binding"/>
    <property type="evidence" value="ECO:0007669"/>
    <property type="project" value="InterPro"/>
</dbReference>
<dbReference type="GO" id="GO:0003824">
    <property type="term" value="F:catalytic activity"/>
    <property type="evidence" value="ECO:0007669"/>
    <property type="project" value="InterPro"/>
</dbReference>
<dbReference type="GO" id="GO:0051274">
    <property type="term" value="P:beta-glucan biosynthetic process"/>
    <property type="evidence" value="ECO:0007669"/>
    <property type="project" value="TreeGrafter"/>
</dbReference>
<dbReference type="FunFam" id="2.60.40.10:FF:000294">
    <property type="entry name" value="Glucans biosynthesis protein G"/>
    <property type="match status" value="1"/>
</dbReference>
<dbReference type="FunFam" id="2.70.98.10:FF:000001">
    <property type="entry name" value="Glucans biosynthesis protein G"/>
    <property type="match status" value="1"/>
</dbReference>
<dbReference type="Gene3D" id="2.70.98.10">
    <property type="match status" value="1"/>
</dbReference>
<dbReference type="Gene3D" id="2.60.40.10">
    <property type="entry name" value="Immunoglobulins"/>
    <property type="match status" value="1"/>
</dbReference>
<dbReference type="HAMAP" id="MF_01069">
    <property type="entry name" value="MdoG_OpgG"/>
    <property type="match status" value="1"/>
</dbReference>
<dbReference type="InterPro" id="IPR011013">
    <property type="entry name" value="Gal_mutarotase_sf_dom"/>
</dbReference>
<dbReference type="InterPro" id="IPR014718">
    <property type="entry name" value="GH-type_carb-bd"/>
</dbReference>
<dbReference type="InterPro" id="IPR014438">
    <property type="entry name" value="Glucan_biosyn_MdoG/MdoD"/>
</dbReference>
<dbReference type="InterPro" id="IPR007444">
    <property type="entry name" value="Glucan_biosyn_MdoG_C"/>
</dbReference>
<dbReference type="InterPro" id="IPR013783">
    <property type="entry name" value="Ig-like_fold"/>
</dbReference>
<dbReference type="InterPro" id="IPR014756">
    <property type="entry name" value="Ig_E-set"/>
</dbReference>
<dbReference type="InterPro" id="IPR023704">
    <property type="entry name" value="MdoG_OpgG"/>
</dbReference>
<dbReference type="PANTHER" id="PTHR30504">
    <property type="entry name" value="GLUCANS BIOSYNTHESIS PROTEIN"/>
    <property type="match status" value="1"/>
</dbReference>
<dbReference type="PANTHER" id="PTHR30504:SF4">
    <property type="entry name" value="GLUCANS BIOSYNTHESIS PROTEIN G"/>
    <property type="match status" value="1"/>
</dbReference>
<dbReference type="Pfam" id="PF04349">
    <property type="entry name" value="MdoG"/>
    <property type="match status" value="1"/>
</dbReference>
<dbReference type="PIRSF" id="PIRSF006281">
    <property type="entry name" value="MdoG"/>
    <property type="match status" value="1"/>
</dbReference>
<dbReference type="SUPFAM" id="SSF81296">
    <property type="entry name" value="E set domains"/>
    <property type="match status" value="1"/>
</dbReference>
<dbReference type="SUPFAM" id="SSF74650">
    <property type="entry name" value="Galactose mutarotase-like"/>
    <property type="match status" value="1"/>
</dbReference>
<reference key="1">
    <citation type="journal article" date="2009" name="PLoS Genet.">
        <title>Organised genome dynamics in the Escherichia coli species results in highly diverse adaptive paths.</title>
        <authorList>
            <person name="Touchon M."/>
            <person name="Hoede C."/>
            <person name="Tenaillon O."/>
            <person name="Barbe V."/>
            <person name="Baeriswyl S."/>
            <person name="Bidet P."/>
            <person name="Bingen E."/>
            <person name="Bonacorsi S."/>
            <person name="Bouchier C."/>
            <person name="Bouvet O."/>
            <person name="Calteau A."/>
            <person name="Chiapello H."/>
            <person name="Clermont O."/>
            <person name="Cruveiller S."/>
            <person name="Danchin A."/>
            <person name="Diard M."/>
            <person name="Dossat C."/>
            <person name="Karoui M.E."/>
            <person name="Frapy E."/>
            <person name="Garry L."/>
            <person name="Ghigo J.M."/>
            <person name="Gilles A.M."/>
            <person name="Johnson J."/>
            <person name="Le Bouguenec C."/>
            <person name="Lescat M."/>
            <person name="Mangenot S."/>
            <person name="Martinez-Jehanne V."/>
            <person name="Matic I."/>
            <person name="Nassif X."/>
            <person name="Oztas S."/>
            <person name="Petit M.A."/>
            <person name="Pichon C."/>
            <person name="Rouy Z."/>
            <person name="Ruf C.S."/>
            <person name="Schneider D."/>
            <person name="Tourret J."/>
            <person name="Vacherie B."/>
            <person name="Vallenet D."/>
            <person name="Medigue C."/>
            <person name="Rocha E.P.C."/>
            <person name="Denamur E."/>
        </authorList>
    </citation>
    <scope>NUCLEOTIDE SEQUENCE [LARGE SCALE GENOMIC DNA]</scope>
    <source>
        <strain>IAI1</strain>
    </source>
</reference>
<comment type="function">
    <text evidence="1">Involved in the biosynthesis of osmoregulated periplasmic glucans (OPGs).</text>
</comment>
<comment type="pathway">
    <text evidence="1">Glycan metabolism; osmoregulated periplasmic glucan (OPG) biosynthesis.</text>
</comment>
<comment type="subcellular location">
    <subcellularLocation>
        <location evidence="1">Periplasm</location>
    </subcellularLocation>
</comment>
<comment type="similarity">
    <text evidence="1">Belongs to the OpgD/OpgG family.</text>
</comment>
<sequence length="511" mass="57896">MMKMRWLSAAVMLTLYTSSSWAFSIDDVAKQAQSLAGKGYEAPKSNLPSVFRDMKYADYQQIQFNHDKAYWNNLKTPFKLEFYHQGMYFDTPVKINEVTATAVKRIKYSPDYFTFGDVQHDKDTVKDLGFAGFKVLYPINSKDKNDEIVSMLGASYFRVIGAGQVYGLSARGLAIDTALPSGEEFPRFKEFWIERPKPTDKRLTIYALLDSPRATGAYKFVVMPGRDTVVDVQSKIYLREKVGKLGVAPLTSMFLFGPNQPSPANNYRPELHDSNGLSIHAGNGEWIWRPLNNPKHLAVSSFSMENPQGFGLLQRGRDFSRFEDLDDRYDLRPSAWVTPKGEWGKGSVELVEIPTNDETNDNIVAYWTPDQLPEPGKEMNFKYTITFSRDEDKLHAPDNAWVQQTRRSTGDVKQSNLIRQPDGTIAFVVDFTGAEMKKLPEDTPVTAQTSIGDNGEIVESTVRYNPVTKGWRLVMRVKVKDAKKTTEMRAALVNADQTLSETWSYQLPANE</sequence>
<feature type="signal peptide" evidence="1">
    <location>
        <begin position="1"/>
        <end position="22"/>
    </location>
</feature>
<feature type="chain" id="PRO_1000136610" description="Glucans biosynthesis protein G">
    <location>
        <begin position="23"/>
        <end position="511"/>
    </location>
</feature>
<protein>
    <recommendedName>
        <fullName evidence="1">Glucans biosynthesis protein G</fullName>
    </recommendedName>
</protein>